<organism>
    <name type="scientific">Caenorhabditis elegans</name>
    <dbReference type="NCBI Taxonomy" id="6239"/>
    <lineage>
        <taxon>Eukaryota</taxon>
        <taxon>Metazoa</taxon>
        <taxon>Ecdysozoa</taxon>
        <taxon>Nematoda</taxon>
        <taxon>Chromadorea</taxon>
        <taxon>Rhabditida</taxon>
        <taxon>Rhabditina</taxon>
        <taxon>Rhabditomorpha</taxon>
        <taxon>Rhabditoidea</taxon>
        <taxon>Rhabditidae</taxon>
        <taxon>Peloderinae</taxon>
        <taxon>Caenorhabditis</taxon>
    </lineage>
</organism>
<dbReference type="EMBL" id="Z83123">
    <property type="protein sequence ID" value="CAB05606.2"/>
    <property type="molecule type" value="Genomic_DNA"/>
</dbReference>
<dbReference type="PIR" id="T24412">
    <property type="entry name" value="T24412"/>
</dbReference>
<dbReference type="RefSeq" id="NP_502387.2">
    <property type="nucleotide sequence ID" value="NM_069986.2"/>
</dbReference>
<dbReference type="FunCoup" id="O18016">
    <property type="interactions" value="105"/>
</dbReference>
<dbReference type="GlyCosmos" id="O18016">
    <property type="glycosylation" value="12 sites, No reported glycans"/>
</dbReference>
<dbReference type="iPTMnet" id="O18016"/>
<dbReference type="PeptideAtlas" id="O18016"/>
<dbReference type="EnsemblMetazoa" id="T04A11.3.1">
    <property type="protein sequence ID" value="T04A11.3.1"/>
    <property type="gene ID" value="WBGene00011418"/>
</dbReference>
<dbReference type="GeneID" id="3565301"/>
<dbReference type="KEGG" id="cel:CELE_T04A11.3"/>
<dbReference type="UCSC" id="T04A11.3">
    <property type="organism name" value="c. elegans"/>
</dbReference>
<dbReference type="AGR" id="WB:WBGene00011418"/>
<dbReference type="CTD" id="3565301"/>
<dbReference type="WormBase" id="T04A11.3">
    <property type="protein sequence ID" value="CE42641"/>
    <property type="gene ID" value="WBGene00011418"/>
    <property type="gene designation" value="igdb-1"/>
</dbReference>
<dbReference type="GeneTree" id="ENSGT00940000156511"/>
<dbReference type="HOGENOM" id="CLU_005277_0_0_1"/>
<dbReference type="InParanoid" id="O18016"/>
<dbReference type="OrthoDB" id="5843172at2759"/>
<dbReference type="PhylomeDB" id="O18016"/>
<dbReference type="Reactome" id="R-CEL-114608">
    <property type="pathway name" value="Platelet degranulation"/>
</dbReference>
<dbReference type="PRO" id="PR:O18016"/>
<dbReference type="Proteomes" id="UP000001940">
    <property type="component" value="Chromosome IV"/>
</dbReference>
<dbReference type="Bgee" id="WBGene00011418">
    <property type="expression patterns" value="Expressed in adult organism and 3 other cell types or tissues"/>
</dbReference>
<dbReference type="GO" id="GO:0031430">
    <property type="term" value="C:M band"/>
    <property type="evidence" value="ECO:0000318"/>
    <property type="project" value="GO_Central"/>
</dbReference>
<dbReference type="GO" id="GO:0005886">
    <property type="term" value="C:plasma membrane"/>
    <property type="evidence" value="ECO:0007669"/>
    <property type="project" value="UniProtKB-SubCell"/>
</dbReference>
<dbReference type="GO" id="GO:0045214">
    <property type="term" value="P:sarcomere organization"/>
    <property type="evidence" value="ECO:0000318"/>
    <property type="project" value="GO_Central"/>
</dbReference>
<dbReference type="CDD" id="cd00063">
    <property type="entry name" value="FN3"/>
    <property type="match status" value="3"/>
</dbReference>
<dbReference type="FunFam" id="2.60.40.10:FF:003749">
    <property type="match status" value="1"/>
</dbReference>
<dbReference type="FunFam" id="2.60.40.10:FF:003809">
    <property type="match status" value="1"/>
</dbReference>
<dbReference type="FunFam" id="2.60.40.10:FF:002443">
    <property type="entry name" value="Ig-like and fibronectin type-III domain-containing protein 1"/>
    <property type="match status" value="1"/>
</dbReference>
<dbReference type="FunFam" id="2.60.40.10:FF:003106">
    <property type="entry name" value="Ig-like and fibronectin type-III domain-containing protein 1"/>
    <property type="match status" value="1"/>
</dbReference>
<dbReference type="Gene3D" id="2.60.40.10">
    <property type="entry name" value="Immunoglobulins"/>
    <property type="match status" value="5"/>
</dbReference>
<dbReference type="InterPro" id="IPR006150">
    <property type="entry name" value="Cys_repeat_1"/>
</dbReference>
<dbReference type="InterPro" id="IPR002602">
    <property type="entry name" value="DB"/>
</dbReference>
<dbReference type="InterPro" id="IPR003961">
    <property type="entry name" value="FN3_dom"/>
</dbReference>
<dbReference type="InterPro" id="IPR036116">
    <property type="entry name" value="FN3_sf"/>
</dbReference>
<dbReference type="InterPro" id="IPR007110">
    <property type="entry name" value="Ig-like_dom"/>
</dbReference>
<dbReference type="InterPro" id="IPR036179">
    <property type="entry name" value="Ig-like_dom_sf"/>
</dbReference>
<dbReference type="InterPro" id="IPR013783">
    <property type="entry name" value="Ig-like_fold"/>
</dbReference>
<dbReference type="InterPro" id="IPR003599">
    <property type="entry name" value="Ig_sub"/>
</dbReference>
<dbReference type="InterPro" id="IPR003598">
    <property type="entry name" value="Ig_sub2"/>
</dbReference>
<dbReference type="InterPro" id="IPR013151">
    <property type="entry name" value="Immunoglobulin_dom"/>
</dbReference>
<dbReference type="InterPro" id="IPR050713">
    <property type="entry name" value="RTP_Phos/Ushers"/>
</dbReference>
<dbReference type="PANTHER" id="PTHR46957">
    <property type="entry name" value="CYTOKINE RECEPTOR"/>
    <property type="match status" value="1"/>
</dbReference>
<dbReference type="PANTHER" id="PTHR46957:SF3">
    <property type="entry name" value="CYTOKINE RECEPTOR"/>
    <property type="match status" value="1"/>
</dbReference>
<dbReference type="Pfam" id="PF01682">
    <property type="entry name" value="DB"/>
    <property type="match status" value="3"/>
</dbReference>
<dbReference type="Pfam" id="PF00041">
    <property type="entry name" value="fn3"/>
    <property type="match status" value="2"/>
</dbReference>
<dbReference type="Pfam" id="PF00047">
    <property type="entry name" value="ig"/>
    <property type="match status" value="1"/>
</dbReference>
<dbReference type="SMART" id="SM00060">
    <property type="entry name" value="FN3"/>
    <property type="match status" value="4"/>
</dbReference>
<dbReference type="SMART" id="SM00409">
    <property type="entry name" value="IG"/>
    <property type="match status" value="1"/>
</dbReference>
<dbReference type="SMART" id="SM00408">
    <property type="entry name" value="IGc2"/>
    <property type="match status" value="1"/>
</dbReference>
<dbReference type="SMART" id="SM00289">
    <property type="entry name" value="WR1"/>
    <property type="match status" value="1"/>
</dbReference>
<dbReference type="SUPFAM" id="SSF49265">
    <property type="entry name" value="Fibronectin type III"/>
    <property type="match status" value="2"/>
</dbReference>
<dbReference type="SUPFAM" id="SSF48726">
    <property type="entry name" value="Immunoglobulin"/>
    <property type="match status" value="1"/>
</dbReference>
<dbReference type="PROSITE" id="PS50853">
    <property type="entry name" value="FN3"/>
    <property type="match status" value="4"/>
</dbReference>
<dbReference type="PROSITE" id="PS50835">
    <property type="entry name" value="IG_LIKE"/>
    <property type="match status" value="1"/>
</dbReference>
<sequence length="1029" mass="113674">MCNVAEDPSSFSTITIATTCRAEWPKVSPCIADGRNHTDCCLKKGVQHDCLEICSGSTKELGVHSVLCLNLDLQAIYQCIRQGYETHPSAPGNVTISELTAHSVTVQWTEPNSNAHLVENYTLFIRKNEHGEAVRTVKNVISPHVELGLDPDSEYVLTLQSHSANGTSLPSTAKLFSTLPTTRPPLCTIGEPIYMNDGRVMICDAVNPCPNGFRCTGAGSDLSYCCPHDGTHSSEEFTSCCKEQKMPESCMSSCQYNMTLPESCKENLNTWVQCASEGHDHLRCCLQEEVSKPCQTACMHPFTVPADECFSEVSKYRTCFSAAHQALPAAVRNVEVSSISKDSATISWEDLEANIIVFRVQLFEKGGNLIKTENSSADIFRFIDLEPNKDYSVRVTAINFLGEGPPSWNATFTTKPAQIYEGDRPVAPEKLRISWNSGPRVNVTWDPVSVRRNAEVVTKPIEYTIYYLDTEQSSTWTTLRTNQTWVVMRDLRKDALYYVYVTAKEDNRTSRSSSIITILAQKDSPGLPEPTIVIEPDHKDGVFSPGEKISINCSLPNIKKHLNIDLTVGSHVVQNDHGALWVILETEADEAMDTATCAVSDTDGRQHVAMKHLVLERKASVTMKKDKIRVLDDQSVEIECIYRGGGLDPKISFEKDGKKASRGFLNLKKTEAGYVAKWHIRKVKQEDAGFYKCVVTSSDGSRVEASSEVIFSTETLPVNPKLILQCCEDEGITGDCLQACNIGRTSLSIKNQNCTRFAVSLLKCASDIRDHSDCCIASGVTSKCLPLCSGDSFSPDIDCSEHAVSIMTCSVKSHEHAPSEVSNVRIKASEGKVNIEWDYPLTKDYKYFAVYYRKAHDDHEDWHKLKTIQQNIELDVDPSEDYEVGILAANALGHSRLMYSAIPKDSEPRRSASKGSSSAFWIVVILVVFGVLIAGLAVLSKRRELPYPIGKFIGRRNDPNQPTVAFENPAYGEPWGGAEVEIRGLGGSATTGTAAATQSEWQSANLEANSTTDNSHEYRNGMRYAKLET</sequence>
<gene>
    <name evidence="8" type="primary">igdb-1</name>
    <name evidence="8" type="ORF">T04A11.3</name>
</gene>
<reference key="1">
    <citation type="journal article" date="1998" name="Science">
        <title>Genome sequence of the nematode C. elegans: a platform for investigating biology.</title>
        <authorList>
            <consortium name="The C. elegans sequencing consortium"/>
        </authorList>
    </citation>
    <scope>NUCLEOTIDE SEQUENCE [LARGE SCALE GENOMIC DNA]</scope>
    <source>
        <strain>Bristol N2</strain>
    </source>
</reference>
<reference key="2">
    <citation type="journal article" date="2003" name="Nat. Biotechnol.">
        <title>Lectin affinity capture, isotope-coded tagging and mass spectrometry to identify N-linked glycoproteins.</title>
        <authorList>
            <person name="Kaji H."/>
            <person name="Saito H."/>
            <person name="Yamauchi Y."/>
            <person name="Shinkawa T."/>
            <person name="Taoka M."/>
            <person name="Hirabayashi J."/>
            <person name="Kasai K."/>
            <person name="Takahashi N."/>
            <person name="Isobe T."/>
        </authorList>
    </citation>
    <scope>GLYCOSYLATION [LARGE SCALE ANALYSIS] AT ASN-165</scope>
    <scope>IDENTIFICATION BY MASS SPECTROMETRY</scope>
    <source>
        <strain>Bristol N2</strain>
    </source>
</reference>
<reference key="3">
    <citation type="journal article" date="2007" name="Mol. Cell. Proteomics">
        <title>Proteomics reveals N-linked glycoprotein diversity in Caenorhabditis elegans and suggests an atypical translocation mechanism for integral membrane proteins.</title>
        <authorList>
            <person name="Kaji H."/>
            <person name="Kamiie J."/>
            <person name="Kawakami H."/>
            <person name="Kido K."/>
            <person name="Yamauchi Y."/>
            <person name="Shinkawa T."/>
            <person name="Taoka M."/>
            <person name="Takahashi N."/>
            <person name="Isobe T."/>
        </authorList>
    </citation>
    <scope>GLYCOSYLATION [LARGE SCALE ANALYSIS] AT ASN-36; ASN-165; ASN-374; ASN-409; ASN-442; ASN-482 AND ASN-552</scope>
    <scope>IDENTIFICATION BY MASS SPECTROMETRY</scope>
    <source>
        <strain>Bristol N2</strain>
    </source>
</reference>
<comment type="subcellular location">
    <subcellularLocation>
        <location evidence="7">Cell membrane</location>
        <topology evidence="7">Single-pass type I membrane protein</topology>
    </subcellularLocation>
</comment>
<evidence type="ECO:0000255" key="1"/>
<evidence type="ECO:0000255" key="2">
    <source>
        <dbReference type="PROSITE-ProRule" id="PRU00114"/>
    </source>
</evidence>
<evidence type="ECO:0000255" key="3">
    <source>
        <dbReference type="PROSITE-ProRule" id="PRU00316"/>
    </source>
</evidence>
<evidence type="ECO:0000256" key="4">
    <source>
        <dbReference type="SAM" id="MobiDB-lite"/>
    </source>
</evidence>
<evidence type="ECO:0000269" key="5">
    <source>
    </source>
</evidence>
<evidence type="ECO:0000269" key="6">
    <source>
    </source>
</evidence>
<evidence type="ECO:0000305" key="7"/>
<evidence type="ECO:0000312" key="8">
    <source>
        <dbReference type="WormBase" id="T04A11.3"/>
    </source>
</evidence>
<keyword id="KW-1003">Cell membrane</keyword>
<keyword id="KW-1015">Disulfide bond</keyword>
<keyword id="KW-0325">Glycoprotein</keyword>
<keyword id="KW-0393">Immunoglobulin domain</keyword>
<keyword id="KW-0472">Membrane</keyword>
<keyword id="KW-1185">Reference proteome</keyword>
<keyword id="KW-0677">Repeat</keyword>
<keyword id="KW-0732">Signal</keyword>
<keyword id="KW-0812">Transmembrane</keyword>
<keyword id="KW-1133">Transmembrane helix</keyword>
<accession>O18016</accession>
<feature type="signal peptide" evidence="1">
    <location>
        <begin position="1"/>
        <end position="22"/>
    </location>
</feature>
<feature type="chain" id="PRO_0000248520" description="Ig-like and fibronectin type-III domain-containing protein 1" evidence="7">
    <location>
        <begin position="23"/>
        <end position="1029"/>
    </location>
</feature>
<feature type="topological domain" description="Extracellular" evidence="1">
    <location>
        <begin position="23"/>
        <end position="918"/>
    </location>
</feature>
<feature type="transmembrane region" description="Helical" evidence="1">
    <location>
        <begin position="919"/>
        <end position="939"/>
    </location>
</feature>
<feature type="topological domain" description="Cytoplasmic" evidence="1">
    <location>
        <begin position="940"/>
        <end position="1029"/>
    </location>
</feature>
<feature type="domain" description="Fibronectin type-III 1" evidence="3">
    <location>
        <begin position="90"/>
        <end position="181"/>
    </location>
</feature>
<feature type="domain" description="WR1">
    <location>
        <begin position="185"/>
        <end position="227"/>
    </location>
</feature>
<feature type="domain" description="Fibronectin type-III 2" evidence="3">
    <location>
        <begin position="330"/>
        <end position="417"/>
    </location>
</feature>
<feature type="domain" description="Fibronectin type-III 3" evidence="3">
    <location>
        <begin position="427"/>
        <end position="523"/>
    </location>
</feature>
<feature type="domain" description="Ig-like C2-type">
    <location>
        <begin position="619"/>
        <end position="710"/>
    </location>
</feature>
<feature type="domain" description="Fibronectin type-III 4" evidence="3">
    <location>
        <begin position="817"/>
        <end position="909"/>
    </location>
</feature>
<feature type="region of interest" description="Disordered" evidence="4">
    <location>
        <begin position="988"/>
        <end position="1021"/>
    </location>
</feature>
<feature type="compositionally biased region" description="Polar residues" evidence="4">
    <location>
        <begin position="998"/>
        <end position="1013"/>
    </location>
</feature>
<feature type="glycosylation site" description="N-linked (GlcNAc...) asparagine" evidence="6">
    <location>
        <position position="36"/>
    </location>
</feature>
<feature type="glycosylation site" description="N-linked (GlcNAc...) asparagine" evidence="1">
    <location>
        <position position="93"/>
    </location>
</feature>
<feature type="glycosylation site" description="N-linked (GlcNAc...) asparagine" evidence="1">
    <location>
        <position position="120"/>
    </location>
</feature>
<feature type="glycosylation site" description="N-linked (GlcNAc...) asparagine" evidence="5 6">
    <location>
        <position position="165"/>
    </location>
</feature>
<feature type="glycosylation site" description="N-linked (GlcNAc...) asparagine" evidence="1">
    <location>
        <position position="257"/>
    </location>
</feature>
<feature type="glycosylation site" description="N-linked (GlcNAc...) asparagine" evidence="6">
    <location>
        <position position="374"/>
    </location>
</feature>
<feature type="glycosylation site" description="N-linked (GlcNAc...) asparagine" evidence="6">
    <location>
        <position position="409"/>
    </location>
</feature>
<feature type="glycosylation site" description="N-linked (GlcNAc...) asparagine" evidence="6">
    <location>
        <position position="442"/>
    </location>
</feature>
<feature type="glycosylation site" description="N-linked (GlcNAc...) asparagine" evidence="6">
    <location>
        <position position="482"/>
    </location>
</feature>
<feature type="glycosylation site" description="N-linked (GlcNAc...) asparagine" evidence="1">
    <location>
        <position position="507"/>
    </location>
</feature>
<feature type="glycosylation site" description="N-linked (GlcNAc...) asparagine" evidence="6">
    <location>
        <position position="552"/>
    </location>
</feature>
<feature type="glycosylation site" description="N-linked (GlcNAc...) asparagine" evidence="1">
    <location>
        <position position="753"/>
    </location>
</feature>
<feature type="disulfide bond" evidence="2">
    <location>
        <begin position="640"/>
        <end position="693"/>
    </location>
</feature>
<protein>
    <recommendedName>
        <fullName evidence="7">Ig-like and fibronectin type-III domain-containing protein 1</fullName>
    </recommendedName>
</protein>
<proteinExistence type="evidence at protein level"/>
<name>IGDB1_CAEEL</name>